<organism>
    <name type="scientific">Homo sapiens</name>
    <name type="common">Human</name>
    <dbReference type="NCBI Taxonomy" id="9606"/>
    <lineage>
        <taxon>Eukaryota</taxon>
        <taxon>Metazoa</taxon>
        <taxon>Chordata</taxon>
        <taxon>Craniata</taxon>
        <taxon>Vertebrata</taxon>
        <taxon>Euteleostomi</taxon>
        <taxon>Mammalia</taxon>
        <taxon>Eutheria</taxon>
        <taxon>Euarchontoglires</taxon>
        <taxon>Primates</taxon>
        <taxon>Haplorrhini</taxon>
        <taxon>Catarrhini</taxon>
        <taxon>Hominidae</taxon>
        <taxon>Homo</taxon>
    </lineage>
</organism>
<feature type="chain" id="PRO_0000213977" description="Golgin subfamily A member 7">
    <location>
        <begin position="1"/>
        <end position="137"/>
    </location>
</feature>
<feature type="lipid moiety-binding region" description="S-palmitoyl cysteine" evidence="1">
    <location>
        <position position="69"/>
    </location>
</feature>
<feature type="lipid moiety-binding region" description="S-palmitoyl cysteine" evidence="1">
    <location>
        <position position="72"/>
    </location>
</feature>
<feature type="splice variant" id="VSP_046793" description="In isoform 2." evidence="3">
    <original>IEITIYEDRGMSSGR</original>
    <variation>FRLKLPFMKTEA</variation>
    <location>
        <begin position="123"/>
        <end position="137"/>
    </location>
</feature>
<feature type="mutagenesis site" description="Slightly reduces palmitoylation." evidence="1">
    <original>C</original>
    <variation>A</variation>
    <location>
        <position position="24"/>
    </location>
</feature>
<feature type="mutagenesis site" description="Strongly reduces palmitoylation. Abolishes palmitoylation and Golgi localization; when associated with A-72." evidence="1">
    <original>C</original>
    <variation>A</variation>
    <location>
        <position position="69"/>
    </location>
</feature>
<feature type="mutagenesis site" description="Strongly reduces palmitoylation. Abolishes palmitoylation and Golgi localization; when associated with A-69." evidence="1">
    <original>C</original>
    <variation>A</variation>
    <location>
        <position position="72"/>
    </location>
</feature>
<feature type="mutagenesis site" description="Slightly reduces palmitoylation." evidence="1">
    <original>C</original>
    <variation>A</variation>
    <location>
        <position position="81"/>
    </location>
</feature>
<feature type="sequence conflict" description="In Ref. 2; AAF65180." evidence="3" ref="2">
    <original>C</original>
    <variation>Y</variation>
    <location>
        <position position="24"/>
    </location>
</feature>
<feature type="strand" evidence="4">
    <location>
        <begin position="8"/>
        <end position="13"/>
    </location>
</feature>
<feature type="turn" evidence="4">
    <location>
        <begin position="33"/>
        <end position="37"/>
    </location>
</feature>
<feature type="helix" evidence="4">
    <location>
        <begin position="40"/>
        <end position="57"/>
    </location>
</feature>
<feature type="helix" evidence="4">
    <location>
        <begin position="63"/>
        <end position="72"/>
    </location>
</feature>
<feature type="turn" evidence="4">
    <location>
        <begin position="73"/>
        <end position="76"/>
    </location>
</feature>
<feature type="helix" evidence="4">
    <location>
        <begin position="78"/>
        <end position="80"/>
    </location>
</feature>
<feature type="helix" evidence="4">
    <location>
        <begin position="85"/>
        <end position="104"/>
    </location>
</feature>
<feature type="turn" evidence="4">
    <location>
        <begin position="105"/>
        <end position="109"/>
    </location>
</feature>
<feature type="turn" evidence="4">
    <location>
        <begin position="115"/>
        <end position="119"/>
    </location>
</feature>
<feature type="strand" evidence="4">
    <location>
        <begin position="124"/>
        <end position="128"/>
    </location>
</feature>
<proteinExistence type="evidence at protein level"/>
<gene>
    <name type="primary">GOLGA7</name>
    <name type="synonym">GCP16</name>
    <name type="ORF">HDCKB03P</name>
    <name type="ORF">HSPC041</name>
</gene>
<keyword id="KW-0002">3D-structure</keyword>
<keyword id="KW-0025">Alternative splicing</keyword>
<keyword id="KW-0333">Golgi apparatus</keyword>
<keyword id="KW-0449">Lipoprotein</keyword>
<keyword id="KW-0472">Membrane</keyword>
<keyword id="KW-0564">Palmitate</keyword>
<keyword id="KW-1267">Proteomics identification</keyword>
<keyword id="KW-1185">Reference proteome</keyword>
<dbReference type="EMBL" id="AB104615">
    <property type="protein sequence ID" value="BAC82368.1"/>
    <property type="molecule type" value="mRNA"/>
</dbReference>
<dbReference type="EMBL" id="AF068291">
    <property type="protein sequence ID" value="AAF65180.1"/>
    <property type="status" value="ALT_INIT"/>
    <property type="molecule type" value="mRNA"/>
</dbReference>
<dbReference type="EMBL" id="AF125102">
    <property type="protein sequence ID" value="AAD39919.1"/>
    <property type="status" value="ALT_SEQ"/>
    <property type="molecule type" value="mRNA"/>
</dbReference>
<dbReference type="EMBL" id="AC009630">
    <property type="status" value="NOT_ANNOTATED_CDS"/>
    <property type="molecule type" value="Genomic_DNA"/>
</dbReference>
<dbReference type="EMBL" id="CH471080">
    <property type="protein sequence ID" value="EAW63258.1"/>
    <property type="molecule type" value="Genomic_DNA"/>
</dbReference>
<dbReference type="EMBL" id="CH471080">
    <property type="protein sequence ID" value="EAW63259.1"/>
    <property type="molecule type" value="Genomic_DNA"/>
</dbReference>
<dbReference type="EMBL" id="BC012032">
    <property type="protein sequence ID" value="AAH12032.1"/>
    <property type="molecule type" value="mRNA"/>
</dbReference>
<dbReference type="CCDS" id="CCDS34887.1">
    <molecule id="Q7Z5G4-1"/>
</dbReference>
<dbReference type="CCDS" id="CCDS55226.1">
    <molecule id="Q7Z5G4-3"/>
</dbReference>
<dbReference type="RefSeq" id="NP_001002296.1">
    <molecule id="Q7Z5G4-1"/>
    <property type="nucleotide sequence ID" value="NM_001002296.2"/>
</dbReference>
<dbReference type="RefSeq" id="NP_001167595.1">
    <molecule id="Q7Z5G4-3"/>
    <property type="nucleotide sequence ID" value="NM_001174124.2"/>
</dbReference>
<dbReference type="RefSeq" id="NP_001349908.1">
    <molecule id="Q7Z5G4-1"/>
    <property type="nucleotide sequence ID" value="NM_001362979.1"/>
</dbReference>
<dbReference type="RefSeq" id="NP_001349909.1">
    <molecule id="Q7Z5G4-1"/>
    <property type="nucleotide sequence ID" value="NM_001362980.2"/>
</dbReference>
<dbReference type="RefSeq" id="NP_057183.2">
    <molecule id="Q7Z5G4-1"/>
    <property type="nucleotide sequence ID" value="NM_016099.3"/>
</dbReference>
<dbReference type="PDB" id="8HF3">
    <property type="method" value="EM"/>
    <property type="resolution" value="3.40 A"/>
    <property type="chains" value="B=1-137"/>
</dbReference>
<dbReference type="PDBsum" id="8HF3"/>
<dbReference type="EMDB" id="EMD-34711"/>
<dbReference type="SMR" id="Q7Z5G4"/>
<dbReference type="BioGRID" id="119312">
    <property type="interactions" value="69"/>
</dbReference>
<dbReference type="CORUM" id="Q7Z5G4"/>
<dbReference type="FunCoup" id="Q7Z5G4">
    <property type="interactions" value="2182"/>
</dbReference>
<dbReference type="IntAct" id="Q7Z5G4">
    <property type="interactions" value="54"/>
</dbReference>
<dbReference type="STRING" id="9606.ENSP00000350378"/>
<dbReference type="TCDB" id="8.A.114.1.5">
    <property type="family name" value="the huntington-interacting protein 14 (hip14) family"/>
</dbReference>
<dbReference type="iPTMnet" id="Q7Z5G4"/>
<dbReference type="PhosphoSitePlus" id="Q7Z5G4"/>
<dbReference type="SwissPalm" id="Q7Z5G4"/>
<dbReference type="BioMuta" id="GOLGA7"/>
<dbReference type="DMDM" id="82592879"/>
<dbReference type="jPOST" id="Q7Z5G4"/>
<dbReference type="MassIVE" id="Q7Z5G4"/>
<dbReference type="PaxDb" id="9606-ENSP00000350378"/>
<dbReference type="PeptideAtlas" id="Q7Z5G4"/>
<dbReference type="ProteomicsDB" id="69287">
    <molecule id="Q7Z5G4-1"/>
</dbReference>
<dbReference type="Pumba" id="Q7Z5G4"/>
<dbReference type="Antibodypedia" id="23926">
    <property type="antibodies" value="134 antibodies from 22 providers"/>
</dbReference>
<dbReference type="DNASU" id="51125"/>
<dbReference type="Ensembl" id="ENST00000357743.9">
    <molecule id="Q7Z5G4-1"/>
    <property type="protein sequence ID" value="ENSP00000350378.4"/>
    <property type="gene ID" value="ENSG00000147533.19"/>
</dbReference>
<dbReference type="Ensembl" id="ENST00000405786.3">
    <molecule id="Q7Z5G4-3"/>
    <property type="protein sequence ID" value="ENSP00000386030.2"/>
    <property type="gene ID" value="ENSG00000147533.19"/>
</dbReference>
<dbReference type="Ensembl" id="ENST00000518270.6">
    <molecule id="Q7Z5G4-1"/>
    <property type="protein sequence ID" value="ENSP00000429329.1"/>
    <property type="gene ID" value="ENSG00000147533.19"/>
</dbReference>
<dbReference type="Ensembl" id="ENST00000687203.1">
    <molecule id="Q7Z5G4-1"/>
    <property type="protein sequence ID" value="ENSP00000510742.1"/>
    <property type="gene ID" value="ENSG00000147533.19"/>
</dbReference>
<dbReference type="Ensembl" id="ENST00000694872.1">
    <molecule id="Q7Z5G4-1"/>
    <property type="protein sequence ID" value="ENSP00000511557.1"/>
    <property type="gene ID" value="ENSG00000147533.19"/>
</dbReference>
<dbReference type="Ensembl" id="ENST00000694873.1">
    <molecule id="Q7Z5G4-1"/>
    <property type="protein sequence ID" value="ENSP00000511558.1"/>
    <property type="gene ID" value="ENSG00000147533.19"/>
</dbReference>
<dbReference type="Ensembl" id="ENST00000694875.1">
    <molecule id="Q7Z5G4-1"/>
    <property type="protein sequence ID" value="ENSP00000511560.1"/>
    <property type="gene ID" value="ENSG00000147533.19"/>
</dbReference>
<dbReference type="Ensembl" id="ENST00000694877.1">
    <molecule id="Q7Z5G4-3"/>
    <property type="protein sequence ID" value="ENSP00000511562.1"/>
    <property type="gene ID" value="ENSG00000147533.19"/>
</dbReference>
<dbReference type="Ensembl" id="ENST00000694878.1">
    <molecule id="Q7Z5G4-3"/>
    <property type="protein sequence ID" value="ENSP00000511563.1"/>
    <property type="gene ID" value="ENSG00000147533.19"/>
</dbReference>
<dbReference type="Ensembl" id="ENST00000694883.1">
    <molecule id="Q7Z5G4-3"/>
    <property type="protein sequence ID" value="ENSP00000511567.1"/>
    <property type="gene ID" value="ENSG00000147533.19"/>
</dbReference>
<dbReference type="Ensembl" id="ENST00000694884.1">
    <molecule id="Q7Z5G4-1"/>
    <property type="protein sequence ID" value="ENSP00000511568.1"/>
    <property type="gene ID" value="ENSG00000147533.19"/>
</dbReference>
<dbReference type="Ensembl" id="ENST00000694886.1">
    <molecule id="Q7Z5G4-1"/>
    <property type="protein sequence ID" value="ENSP00000511569.1"/>
    <property type="gene ID" value="ENSG00000147533.19"/>
</dbReference>
<dbReference type="Ensembl" id="ENST00000694887.1">
    <molecule id="Q7Z5G4-1"/>
    <property type="protein sequence ID" value="ENSP00000511570.1"/>
    <property type="gene ID" value="ENSG00000147533.19"/>
</dbReference>
<dbReference type="Ensembl" id="ENST00000694911.1">
    <molecule id="Q7Z5G4-1"/>
    <property type="protein sequence ID" value="ENSP00000511586.1"/>
    <property type="gene ID" value="ENSG00000147533.19"/>
</dbReference>
<dbReference type="Ensembl" id="ENST00000694916.1">
    <molecule id="Q7Z5G4-1"/>
    <property type="protein sequence ID" value="ENSP00000511591.1"/>
    <property type="gene ID" value="ENSG00000147533.19"/>
</dbReference>
<dbReference type="GeneID" id="51125"/>
<dbReference type="KEGG" id="hsa:51125"/>
<dbReference type="MANE-Select" id="ENST00000357743.9">
    <property type="protein sequence ID" value="ENSP00000350378.4"/>
    <property type="RefSeq nucleotide sequence ID" value="NM_001002296.2"/>
    <property type="RefSeq protein sequence ID" value="NP_001002296.1"/>
</dbReference>
<dbReference type="UCSC" id="uc003xnu.4">
    <molecule id="Q7Z5G4-1"/>
    <property type="organism name" value="human"/>
</dbReference>
<dbReference type="AGR" id="HGNC:24876"/>
<dbReference type="CTD" id="51125"/>
<dbReference type="DisGeNET" id="51125"/>
<dbReference type="GeneCards" id="GOLGA7"/>
<dbReference type="HGNC" id="HGNC:24876">
    <property type="gene designation" value="GOLGA7"/>
</dbReference>
<dbReference type="HPA" id="ENSG00000147533">
    <property type="expression patterns" value="Low tissue specificity"/>
</dbReference>
<dbReference type="MIM" id="609453">
    <property type="type" value="gene"/>
</dbReference>
<dbReference type="neXtProt" id="NX_Q7Z5G4"/>
<dbReference type="OpenTargets" id="ENSG00000147533"/>
<dbReference type="PharmGKB" id="PA37002"/>
<dbReference type="VEuPathDB" id="HostDB:ENSG00000147533"/>
<dbReference type="eggNOG" id="KOG4069">
    <property type="taxonomic scope" value="Eukaryota"/>
</dbReference>
<dbReference type="GeneTree" id="ENSGT00390000000134"/>
<dbReference type="HOGENOM" id="CLU_130071_0_1_1"/>
<dbReference type="InParanoid" id="Q7Z5G4"/>
<dbReference type="OMA" id="CEMRPQQ"/>
<dbReference type="OrthoDB" id="2190159at2759"/>
<dbReference type="PAN-GO" id="Q7Z5G4">
    <property type="GO annotations" value="5 GO annotations based on evolutionary models"/>
</dbReference>
<dbReference type="PhylomeDB" id="Q7Z5G4"/>
<dbReference type="TreeFam" id="TF313115"/>
<dbReference type="PathwayCommons" id="Q7Z5G4"/>
<dbReference type="Reactome" id="R-HSA-6798695">
    <property type="pathway name" value="Neutrophil degranulation"/>
</dbReference>
<dbReference type="Reactome" id="R-HSA-9648002">
    <property type="pathway name" value="RAS processing"/>
</dbReference>
<dbReference type="Reactome" id="R-HSA-9694548">
    <property type="pathway name" value="Maturation of spike protein"/>
</dbReference>
<dbReference type="SignaLink" id="Q7Z5G4"/>
<dbReference type="SIGNOR" id="Q7Z5G4"/>
<dbReference type="BioGRID-ORCS" id="51125">
    <property type="hits" value="25 hits in 1167 CRISPR screens"/>
</dbReference>
<dbReference type="ChiTaRS" id="GOLGA7">
    <property type="organism name" value="human"/>
</dbReference>
<dbReference type="GenomeRNAi" id="51125"/>
<dbReference type="Pharos" id="Q7Z5G4">
    <property type="development level" value="Tbio"/>
</dbReference>
<dbReference type="PRO" id="PR:Q7Z5G4"/>
<dbReference type="Proteomes" id="UP000005640">
    <property type="component" value="Chromosome 8"/>
</dbReference>
<dbReference type="RNAct" id="Q7Z5G4">
    <property type="molecule type" value="protein"/>
</dbReference>
<dbReference type="Bgee" id="ENSG00000147533">
    <property type="expression patterns" value="Expressed in inferior vagus X ganglion and 218 other cell types or tissues"/>
</dbReference>
<dbReference type="GO" id="GO:0070062">
    <property type="term" value="C:extracellular exosome"/>
    <property type="evidence" value="ECO:0007005"/>
    <property type="project" value="UniProtKB"/>
</dbReference>
<dbReference type="GO" id="GO:0005576">
    <property type="term" value="C:extracellular region"/>
    <property type="evidence" value="ECO:0000304"/>
    <property type="project" value="Reactome"/>
</dbReference>
<dbReference type="GO" id="GO:0000139">
    <property type="term" value="C:Golgi membrane"/>
    <property type="evidence" value="ECO:0000314"/>
    <property type="project" value="UniProtKB"/>
</dbReference>
<dbReference type="GO" id="GO:0005795">
    <property type="term" value="C:Golgi stack"/>
    <property type="evidence" value="ECO:0000314"/>
    <property type="project" value="UniProtKB"/>
</dbReference>
<dbReference type="GO" id="GO:0002178">
    <property type="term" value="C:palmitoyltransferase complex"/>
    <property type="evidence" value="ECO:0000314"/>
    <property type="project" value="UniProtKB"/>
</dbReference>
<dbReference type="GO" id="GO:1904724">
    <property type="term" value="C:tertiary granule lumen"/>
    <property type="evidence" value="ECO:0000304"/>
    <property type="project" value="Reactome"/>
</dbReference>
<dbReference type="GO" id="GO:0043001">
    <property type="term" value="P:Golgi to plasma membrane protein transport"/>
    <property type="evidence" value="ECO:0000314"/>
    <property type="project" value="UniProtKB"/>
</dbReference>
<dbReference type="GO" id="GO:0006893">
    <property type="term" value="P:Golgi to plasma membrane transport"/>
    <property type="evidence" value="ECO:0000314"/>
    <property type="project" value="MGI"/>
</dbReference>
<dbReference type="GO" id="GO:0018230">
    <property type="term" value="P:peptidyl-L-cysteine S-palmitoylation"/>
    <property type="evidence" value="ECO:0000314"/>
    <property type="project" value="UniProtKB"/>
</dbReference>
<dbReference type="GO" id="GO:0050821">
    <property type="term" value="P:protein stabilization"/>
    <property type="evidence" value="ECO:0000314"/>
    <property type="project" value="UniProtKB"/>
</dbReference>
<dbReference type="GO" id="GO:0006612">
    <property type="term" value="P:protein targeting to membrane"/>
    <property type="evidence" value="ECO:0000318"/>
    <property type="project" value="GO_Central"/>
</dbReference>
<dbReference type="InterPro" id="IPR019383">
    <property type="entry name" value="Golgin_A_7/ERF4"/>
</dbReference>
<dbReference type="InterPro" id="IPR051371">
    <property type="entry name" value="Ras_palmitoyltransferase"/>
</dbReference>
<dbReference type="PANTHER" id="PTHR13254">
    <property type="entry name" value="GOLGI AUTOANTIGEN, GOLGIN SUBFAMILY A, 7"/>
    <property type="match status" value="1"/>
</dbReference>
<dbReference type="PANTHER" id="PTHR13254:SF1">
    <property type="entry name" value="GOLGIN SUBFAMILY A MEMBER 7"/>
    <property type="match status" value="1"/>
</dbReference>
<dbReference type="Pfam" id="PF10256">
    <property type="entry name" value="Erf4"/>
    <property type="match status" value="1"/>
</dbReference>
<name>GOGA7_HUMAN</name>
<evidence type="ECO:0000269" key="1">
    <source>
    </source>
</evidence>
<evidence type="ECO:0000269" key="2">
    <source>
    </source>
</evidence>
<evidence type="ECO:0000305" key="3"/>
<evidence type="ECO:0007829" key="4">
    <source>
        <dbReference type="PDB" id="8HF3"/>
    </source>
</evidence>
<comment type="function">
    <text evidence="1 2">May be involved in protein transport from Golgi to cell surface. The ZDHHC9-GOLGA7 complex is a palmitoyltransferase specific for HRAS and NRAS.</text>
</comment>
<comment type="subunit">
    <text evidence="1 2">Interacts with GOLGA3. Interacts with ZDHHC9.</text>
</comment>
<comment type="interaction">
    <interactant intactId="EBI-4403685">
        <id>Q7Z5G4</id>
    </interactant>
    <interactant intactId="EBI-77797">
        <id>P35609</id>
        <label>ACTN2</label>
    </interactant>
    <organismsDiffer>false</organismsDiffer>
    <experiments>3</experiments>
</comment>
<comment type="interaction">
    <interactant intactId="EBI-4403685">
        <id>Q7Z5G4</id>
    </interactant>
    <interactant intactId="EBI-18397873">
        <id>Q6L9T8</id>
        <label>FAM72D</label>
    </interactant>
    <organismsDiffer>false</organismsDiffer>
    <experiments>3</experiments>
</comment>
<comment type="interaction">
    <interactant intactId="EBI-4403685">
        <id>Q7Z5G4</id>
    </interactant>
    <interactant intactId="EBI-348399">
        <id>P22607</id>
        <label>FGFR3</label>
    </interactant>
    <organismsDiffer>false</organismsDiffer>
    <experiments>3</experiments>
</comment>
<comment type="interaction">
    <interactant intactId="EBI-4403685">
        <id>Q7Z5G4</id>
    </interactant>
    <interactant intactId="EBI-1053003">
        <id>Q9NS61-2</id>
        <label>KCNIP2</label>
    </interactant>
    <organismsDiffer>false</organismsDiffer>
    <experiments>3</experiments>
</comment>
<comment type="interaction">
    <interactant intactId="EBI-4403685">
        <id>Q7Z5G4</id>
    </interactant>
    <interactant intactId="EBI-751501">
        <id>Q9Y2W7</id>
        <label>KCNIP3</label>
    </interactant>
    <organismsDiffer>false</organismsDiffer>
    <experiments>3</experiments>
</comment>
<comment type="interaction">
    <interactant intactId="EBI-4403685">
        <id>Q7Z5G4</id>
    </interactant>
    <interactant intactId="EBI-1051469">
        <id>Q6PIL6</id>
        <label>KCNIP4</label>
    </interactant>
    <organismsDiffer>false</organismsDiffer>
    <experiments>3</experiments>
</comment>
<comment type="interaction">
    <interactant intactId="EBI-4403685">
        <id>Q7Z5G4</id>
    </interactant>
    <interactant intactId="EBI-6165891">
        <id>Q14696</id>
        <label>MESD</label>
    </interactant>
    <organismsDiffer>false</organismsDiffer>
    <experiments>3</experiments>
</comment>
<comment type="interaction">
    <interactant intactId="EBI-4403685">
        <id>Q7Z5G4</id>
    </interactant>
    <interactant intactId="EBI-10172526">
        <id>Q9UJV3-2</id>
        <label>MID2</label>
    </interactant>
    <organismsDiffer>false</organismsDiffer>
    <experiments>3</experiments>
</comment>
<comment type="interaction">
    <interactant intactId="EBI-4403685">
        <id>Q7Z5G4</id>
    </interactant>
    <interactant intactId="EBI-749635">
        <id>P61601</id>
        <label>NCALD</label>
    </interactant>
    <organismsDiffer>false</organismsDiffer>
    <experiments>3</experiments>
</comment>
<comment type="interaction">
    <interactant intactId="EBI-4403685">
        <id>Q7Z5G4</id>
    </interactant>
    <interactant intactId="EBI-25474821">
        <id>P0DTC2</id>
        <label>S</label>
    </interactant>
    <organismsDiffer>true</organismsDiffer>
    <experiments>7</experiments>
</comment>
<comment type="subcellular location">
    <subcellularLocation>
        <location evidence="1 2">Golgi apparatus membrane</location>
        <topology evidence="1 2">Lipid-anchor</topology>
    </subcellularLocation>
</comment>
<comment type="alternative products">
    <event type="alternative splicing"/>
    <isoform>
        <id>Q7Z5G4-1</id>
        <name>1</name>
        <sequence type="displayed"/>
    </isoform>
    <isoform>
        <id>Q7Z5G4-3</id>
        <name>2</name>
        <sequence type="described" ref="VSP_046793"/>
    </isoform>
</comment>
<comment type="tissue specificity">
    <text evidence="1 2">Expressed in all tissues except colon and thymus.</text>
</comment>
<comment type="PTM">
    <text evidence="1">Palmitoylated on Cys-69 and Cys-72; which is required for Golgi localization and interaction with GOLGA3.</text>
</comment>
<comment type="similarity">
    <text evidence="3">Belongs to the ERF4 family.</text>
</comment>
<comment type="sequence caution" evidence="3">
    <conflict type="frameshift">
        <sequence resource="EMBL-CDS" id="AAD39919"/>
    </conflict>
</comment>
<comment type="sequence caution" evidence="3">
    <conflict type="erroneous initiation">
        <sequence resource="EMBL-CDS" id="AAF65180"/>
    </conflict>
</comment>
<accession>Q7Z5G4</accession>
<accession>D3DSX9</accession>
<accession>J3KQ24</accession>
<accession>Q96EQ4</accession>
<accession>Q9P1S0</accession>
<accession>Q9Y5U7</accession>
<sequence length="137" mass="15824">MRPQQAPVSGKVFIQRDYSSGTRCQFQTKFPAELENRIDRQQFEETVRTLNNLYAEAEKLGGQSYLEGCLACLTAYTIFLCMETHYEKVLKKVSKYIQEQNEKIYAPQGLLLTDPIERGLRVIEITIYEDRGMSSGR</sequence>
<reference key="1">
    <citation type="journal article" date="2003" name="J. Biol. Chem.">
        <title>Identification and characterization of GCP16, a novel acylated Golgi protein that interacts with GCP170.</title>
        <authorList>
            <person name="Ohta E."/>
            <person name="Misumi Y."/>
            <person name="Sohda M."/>
            <person name="Fujiwara T."/>
            <person name="Yano A."/>
            <person name="Ikehara Y."/>
        </authorList>
    </citation>
    <scope>NUCLEOTIDE SEQUENCE [MRNA] (ISOFORM 1)</scope>
    <scope>INTERACTION WITH GOLGA3</scope>
    <scope>TISSUE SPECIFICITY</scope>
    <scope>PALMITOYLATION AT CYS-69 AND CYS-72</scope>
    <scope>MUTAGENESIS OF CYS-24; CYS-69; CYS-72 AND CYS-81</scope>
    <scope>SUBCELLULAR LOCATION</scope>
    <scope>FUNCTION</scope>
</reference>
<reference key="2">
    <citation type="submission" date="1998-05" db="EMBL/GenBank/DDBJ databases">
        <title>A novel gene from human dendritic cell.</title>
        <authorList>
            <person name="Zhao Z."/>
            <person name="Huang X."/>
            <person name="Li N."/>
            <person name="Zhu X."/>
            <person name="Cao X."/>
        </authorList>
    </citation>
    <scope>NUCLEOTIDE SEQUENCE [LARGE SCALE MRNA] (ISOFORM 1)</scope>
</reference>
<reference key="3">
    <citation type="journal article" date="2000" name="Genome Res.">
        <title>Cloning and functional analysis of cDNAs with open reading frames for 300 previously undefined genes expressed in CD34+ hematopoietic stem/progenitor cells.</title>
        <authorList>
            <person name="Zhang Q.-H."/>
            <person name="Ye M."/>
            <person name="Wu X.-Y."/>
            <person name="Ren S.-X."/>
            <person name="Zhao M."/>
            <person name="Zhao C.-J."/>
            <person name="Fu G."/>
            <person name="Shen Y."/>
            <person name="Fan H.-Y."/>
            <person name="Lu G."/>
            <person name="Zhong M."/>
            <person name="Xu X.-R."/>
            <person name="Han Z.-G."/>
            <person name="Zhang J.-W."/>
            <person name="Tao J."/>
            <person name="Huang Q.-H."/>
            <person name="Zhou J."/>
            <person name="Hu G.-X."/>
            <person name="Gu J."/>
            <person name="Chen S.-J."/>
            <person name="Chen Z."/>
        </authorList>
    </citation>
    <scope>NUCLEOTIDE SEQUENCE [LARGE SCALE MRNA] (ISOFORM 1)</scope>
    <source>
        <tissue>Umbilical cord blood</tissue>
    </source>
</reference>
<reference key="4">
    <citation type="journal article" date="2006" name="Nature">
        <title>DNA sequence and analysis of human chromosome 8.</title>
        <authorList>
            <person name="Nusbaum C."/>
            <person name="Mikkelsen T.S."/>
            <person name="Zody M.C."/>
            <person name="Asakawa S."/>
            <person name="Taudien S."/>
            <person name="Garber M."/>
            <person name="Kodira C.D."/>
            <person name="Schueler M.G."/>
            <person name="Shimizu A."/>
            <person name="Whittaker C.A."/>
            <person name="Chang J.L."/>
            <person name="Cuomo C.A."/>
            <person name="Dewar K."/>
            <person name="FitzGerald M.G."/>
            <person name="Yang X."/>
            <person name="Allen N.R."/>
            <person name="Anderson S."/>
            <person name="Asakawa T."/>
            <person name="Blechschmidt K."/>
            <person name="Bloom T."/>
            <person name="Borowsky M.L."/>
            <person name="Butler J."/>
            <person name="Cook A."/>
            <person name="Corum B."/>
            <person name="DeArellano K."/>
            <person name="DeCaprio D."/>
            <person name="Dooley K.T."/>
            <person name="Dorris L. III"/>
            <person name="Engels R."/>
            <person name="Gloeckner G."/>
            <person name="Hafez N."/>
            <person name="Hagopian D.S."/>
            <person name="Hall J.L."/>
            <person name="Ishikawa S.K."/>
            <person name="Jaffe D.B."/>
            <person name="Kamat A."/>
            <person name="Kudoh J."/>
            <person name="Lehmann R."/>
            <person name="Lokitsang T."/>
            <person name="Macdonald P."/>
            <person name="Major J.E."/>
            <person name="Matthews C.D."/>
            <person name="Mauceli E."/>
            <person name="Menzel U."/>
            <person name="Mihalev A.H."/>
            <person name="Minoshima S."/>
            <person name="Murayama Y."/>
            <person name="Naylor J.W."/>
            <person name="Nicol R."/>
            <person name="Nguyen C."/>
            <person name="O'Leary S.B."/>
            <person name="O'Neill K."/>
            <person name="Parker S.C.J."/>
            <person name="Polley A."/>
            <person name="Raymond C.K."/>
            <person name="Reichwald K."/>
            <person name="Rodriguez J."/>
            <person name="Sasaki T."/>
            <person name="Schilhabel M."/>
            <person name="Siddiqui R."/>
            <person name="Smith C.L."/>
            <person name="Sneddon T.P."/>
            <person name="Talamas J.A."/>
            <person name="Tenzin P."/>
            <person name="Topham K."/>
            <person name="Venkataraman V."/>
            <person name="Wen G."/>
            <person name="Yamazaki S."/>
            <person name="Young S.K."/>
            <person name="Zeng Q."/>
            <person name="Zimmer A.R."/>
            <person name="Rosenthal A."/>
            <person name="Birren B.W."/>
            <person name="Platzer M."/>
            <person name="Shimizu N."/>
            <person name="Lander E.S."/>
        </authorList>
    </citation>
    <scope>NUCLEOTIDE SEQUENCE [LARGE SCALE GENOMIC DNA]</scope>
</reference>
<reference key="5">
    <citation type="submission" date="2005-09" db="EMBL/GenBank/DDBJ databases">
        <authorList>
            <person name="Mural R.J."/>
            <person name="Istrail S."/>
            <person name="Sutton G.G."/>
            <person name="Florea L."/>
            <person name="Halpern A.L."/>
            <person name="Mobarry C.M."/>
            <person name="Lippert R."/>
            <person name="Walenz B."/>
            <person name="Shatkay H."/>
            <person name="Dew I."/>
            <person name="Miller J.R."/>
            <person name="Flanigan M.J."/>
            <person name="Edwards N.J."/>
            <person name="Bolanos R."/>
            <person name="Fasulo D."/>
            <person name="Halldorsson B.V."/>
            <person name="Hannenhalli S."/>
            <person name="Turner R."/>
            <person name="Yooseph S."/>
            <person name="Lu F."/>
            <person name="Nusskern D.R."/>
            <person name="Shue B.C."/>
            <person name="Zheng X.H."/>
            <person name="Zhong F."/>
            <person name="Delcher A.L."/>
            <person name="Huson D.H."/>
            <person name="Kravitz S.A."/>
            <person name="Mouchard L."/>
            <person name="Reinert K."/>
            <person name="Remington K.A."/>
            <person name="Clark A.G."/>
            <person name="Waterman M.S."/>
            <person name="Eichler E.E."/>
            <person name="Adams M.D."/>
            <person name="Hunkapiller M.W."/>
            <person name="Myers E.W."/>
            <person name="Venter J.C."/>
        </authorList>
    </citation>
    <scope>NUCLEOTIDE SEQUENCE [LARGE SCALE GENOMIC DNA]</scope>
</reference>
<reference key="6">
    <citation type="journal article" date="2004" name="Genome Res.">
        <title>The status, quality, and expansion of the NIH full-length cDNA project: the Mammalian Gene Collection (MGC).</title>
        <authorList>
            <consortium name="The MGC Project Team"/>
        </authorList>
    </citation>
    <scope>NUCLEOTIDE SEQUENCE [LARGE SCALE MRNA] (ISOFORM 1)</scope>
    <source>
        <tissue>Mammary gland</tissue>
    </source>
</reference>
<reference key="7">
    <citation type="journal article" date="2005" name="J. Biol. Chem.">
        <title>DHHC9 and GCP16 constitute a human protein fatty acyltransferase with specificity for H- and N-Ras.</title>
        <authorList>
            <person name="Swarthout J.T."/>
            <person name="Lobo S."/>
            <person name="Farh L."/>
            <person name="Croke M.R."/>
            <person name="Greentree W.K."/>
            <person name="Deschenes R.J."/>
            <person name="Linder M.E."/>
        </authorList>
    </citation>
    <scope>TISSUE SPECIFICITY</scope>
    <scope>SUBCELLULAR LOCATION</scope>
    <scope>INTERACTION WITH ZDHHC9</scope>
    <scope>FUNCTION</scope>
</reference>
<reference key="8">
    <citation type="journal article" date="2011" name="BMC Syst. Biol.">
        <title>Initial characterization of the human central proteome.</title>
        <authorList>
            <person name="Burkard T.R."/>
            <person name="Planyavsky M."/>
            <person name="Kaupe I."/>
            <person name="Breitwieser F.P."/>
            <person name="Buerckstuemmer T."/>
            <person name="Bennett K.L."/>
            <person name="Superti-Furga G."/>
            <person name="Colinge J."/>
        </authorList>
    </citation>
    <scope>IDENTIFICATION BY MASS SPECTROMETRY [LARGE SCALE ANALYSIS]</scope>
</reference>
<reference key="9">
    <citation type="journal article" date="2015" name="Proteomics">
        <title>N-terminome analysis of the human mitochondrial proteome.</title>
        <authorList>
            <person name="Vaca Jacome A.S."/>
            <person name="Rabilloud T."/>
            <person name="Schaeffer-Reiss C."/>
            <person name="Rompais M."/>
            <person name="Ayoub D."/>
            <person name="Lane L."/>
            <person name="Bairoch A."/>
            <person name="Van Dorsselaer A."/>
            <person name="Carapito C."/>
        </authorList>
    </citation>
    <scope>IDENTIFICATION BY MASS SPECTROMETRY [LARGE SCALE ANALYSIS]</scope>
</reference>
<protein>
    <recommendedName>
        <fullName>Golgin subfamily A member 7</fullName>
    </recommendedName>
    <alternativeName>
        <fullName>Golgi complex-associated protein of 16 kDa</fullName>
    </alternativeName>
</protein>